<gene>
    <name evidence="8 9" type="primary">WSD6</name>
    <name evidence="11" type="ordered locus">At3g49210</name>
    <name evidence="12" type="ORF">F2K15.70</name>
</gene>
<proteinExistence type="evidence at protein level"/>
<feature type="chain" id="PRO_0000452616" description="Wax ester synthase/diacylglycerol acyltransferase 6">
    <location>
        <begin position="1"/>
        <end position="518"/>
    </location>
</feature>
<feature type="topological domain" description="Cytoplasmic" evidence="10">
    <location>
        <begin position="1"/>
        <end position="213"/>
    </location>
</feature>
<feature type="transmembrane region" description="Helical" evidence="3">
    <location>
        <begin position="214"/>
        <end position="234"/>
    </location>
</feature>
<feature type="topological domain" description="Lumenal" evidence="10">
    <location>
        <begin position="235"/>
        <end position="518"/>
    </location>
</feature>
<feature type="region of interest" description="Disordered" evidence="5">
    <location>
        <begin position="1"/>
        <end position="29"/>
    </location>
</feature>
<feature type="region of interest" description="Disordered" evidence="5">
    <location>
        <begin position="185"/>
        <end position="205"/>
    </location>
</feature>
<feature type="compositionally biased region" description="Basic and acidic residues" evidence="5">
    <location>
        <begin position="1"/>
        <end position="17"/>
    </location>
</feature>
<feature type="active site" description="Proton acceptor" evidence="3">
    <location>
        <position position="163"/>
    </location>
</feature>
<feature type="glycosylation site" description="N-linked (GlcNAc...) asparagine" evidence="4">
    <location>
        <position position="430"/>
    </location>
</feature>
<feature type="splice variant" id="VSP_061028" description="In isoform 2.">
    <location>
        <begin position="1"/>
        <end position="168"/>
    </location>
</feature>
<feature type="sequence conflict" description="In Ref. 3; BX824670." evidence="10" ref="3">
    <original>M</original>
    <variation>V</variation>
    <location>
        <position position="77"/>
    </location>
</feature>
<feature type="sequence conflict" description="In Ref. 3; BX824670." evidence="10" ref="3">
    <original>N</original>
    <variation>K</variation>
    <location>
        <position position="112"/>
    </location>
</feature>
<feature type="sequence conflict" description="In Ref. 3; BX824670." evidence="10" ref="3">
    <original>T</original>
    <variation>R</variation>
    <location>
        <position position="182"/>
    </location>
</feature>
<feature type="sequence conflict" description="In Ref. 3; BX824670." evidence="10" ref="3">
    <original>S</original>
    <variation>N</variation>
    <location>
        <position position="261"/>
    </location>
</feature>
<accession>Q9M3B1</accession>
<accession>Q0WP61</accession>
<dbReference type="EC" id="2.3.1.20" evidence="2"/>
<dbReference type="EC" id="2.3.1.75" evidence="7"/>
<dbReference type="EMBL" id="AL132956">
    <property type="protein sequence ID" value="CAB66400.1"/>
    <property type="molecule type" value="Genomic_DNA"/>
</dbReference>
<dbReference type="EMBL" id="CP002686">
    <property type="protein sequence ID" value="AEE78511.1"/>
    <property type="molecule type" value="Genomic_DNA"/>
</dbReference>
<dbReference type="EMBL" id="BX824670">
    <property type="status" value="NOT_ANNOTATED_CDS"/>
    <property type="molecule type" value="mRNA"/>
</dbReference>
<dbReference type="EMBL" id="AK229221">
    <property type="protein sequence ID" value="BAF01088.1"/>
    <property type="molecule type" value="mRNA"/>
</dbReference>
<dbReference type="PIR" id="T45826">
    <property type="entry name" value="T45826"/>
</dbReference>
<dbReference type="RefSeq" id="NP_190490.1">
    <molecule id="Q9M3B1-1"/>
    <property type="nucleotide sequence ID" value="NM_114780.5"/>
</dbReference>
<dbReference type="SMR" id="Q9M3B1"/>
<dbReference type="FunCoup" id="Q9M3B1">
    <property type="interactions" value="6"/>
</dbReference>
<dbReference type="STRING" id="3702.Q9M3B1"/>
<dbReference type="GlyCosmos" id="Q9M3B1">
    <property type="glycosylation" value="1 site, No reported glycans"/>
</dbReference>
<dbReference type="GlyGen" id="Q9M3B1">
    <property type="glycosylation" value="1 site"/>
</dbReference>
<dbReference type="iPTMnet" id="Q9M3B1"/>
<dbReference type="PaxDb" id="3702-AT3G49210.1"/>
<dbReference type="ProteomicsDB" id="187263"/>
<dbReference type="EnsemblPlants" id="AT3G49210.1">
    <molecule id="Q9M3B1-1"/>
    <property type="protein sequence ID" value="AT3G49210.1"/>
    <property type="gene ID" value="AT3G49210"/>
</dbReference>
<dbReference type="GeneID" id="824082"/>
<dbReference type="Gramene" id="AT3G49210.1">
    <molecule id="Q9M3B1-1"/>
    <property type="protein sequence ID" value="AT3G49210.1"/>
    <property type="gene ID" value="AT3G49210"/>
</dbReference>
<dbReference type="KEGG" id="ath:AT3G49210"/>
<dbReference type="Araport" id="AT3G49210"/>
<dbReference type="TAIR" id="AT3G49210">
    <property type="gene designation" value="WSD6"/>
</dbReference>
<dbReference type="eggNOG" id="ENOG502QTZ2">
    <property type="taxonomic scope" value="Eukaryota"/>
</dbReference>
<dbReference type="HOGENOM" id="CLU_027831_0_0_1"/>
<dbReference type="InParanoid" id="Q9M3B1"/>
<dbReference type="OMA" id="RFLWLIM"/>
<dbReference type="OrthoDB" id="619536at2759"/>
<dbReference type="PhylomeDB" id="Q9M3B1"/>
<dbReference type="UniPathway" id="UPA00282"/>
<dbReference type="PRO" id="PR:Q9M3B1"/>
<dbReference type="Proteomes" id="UP000006548">
    <property type="component" value="Chromosome 3"/>
</dbReference>
<dbReference type="ExpressionAtlas" id="Q9M3B1">
    <property type="expression patterns" value="baseline and differential"/>
</dbReference>
<dbReference type="GO" id="GO:0005783">
    <property type="term" value="C:endoplasmic reticulum"/>
    <property type="evidence" value="ECO:0000314"/>
    <property type="project" value="TAIR"/>
</dbReference>
<dbReference type="GO" id="GO:0005789">
    <property type="term" value="C:endoplasmic reticulum membrane"/>
    <property type="evidence" value="ECO:0007669"/>
    <property type="project" value="UniProtKB-SubCell"/>
</dbReference>
<dbReference type="GO" id="GO:0005794">
    <property type="term" value="C:Golgi apparatus"/>
    <property type="evidence" value="ECO:0000314"/>
    <property type="project" value="TAIR"/>
</dbReference>
<dbReference type="GO" id="GO:0000139">
    <property type="term" value="C:Golgi membrane"/>
    <property type="evidence" value="ECO:0007669"/>
    <property type="project" value="UniProtKB-SubCell"/>
</dbReference>
<dbReference type="GO" id="GO:0005886">
    <property type="term" value="C:plasma membrane"/>
    <property type="evidence" value="ECO:0007669"/>
    <property type="project" value="UniProtKB-SubCell"/>
</dbReference>
<dbReference type="GO" id="GO:0004144">
    <property type="term" value="F:diacylglycerol O-acyltransferase activity"/>
    <property type="evidence" value="ECO:0007669"/>
    <property type="project" value="UniProtKB-EC"/>
</dbReference>
<dbReference type="GO" id="GO:0047196">
    <property type="term" value="F:long-chain-alcohol O-fatty-acyltransferase activity"/>
    <property type="evidence" value="ECO:0000314"/>
    <property type="project" value="TAIR"/>
</dbReference>
<dbReference type="GO" id="GO:0009737">
    <property type="term" value="P:response to abscisic acid"/>
    <property type="evidence" value="ECO:0000270"/>
    <property type="project" value="UniProtKB"/>
</dbReference>
<dbReference type="GO" id="GO:0009651">
    <property type="term" value="P:response to salt stress"/>
    <property type="evidence" value="ECO:0000270"/>
    <property type="project" value="UniProtKB"/>
</dbReference>
<dbReference type="GO" id="GO:0009414">
    <property type="term" value="P:response to water deprivation"/>
    <property type="evidence" value="ECO:0000270"/>
    <property type="project" value="UniProtKB"/>
</dbReference>
<dbReference type="GO" id="GO:0019432">
    <property type="term" value="P:triglyceride biosynthetic process"/>
    <property type="evidence" value="ECO:0007669"/>
    <property type="project" value="UniProtKB-UniPathway"/>
</dbReference>
<dbReference type="GO" id="GO:0010025">
    <property type="term" value="P:wax biosynthetic process"/>
    <property type="evidence" value="ECO:0000314"/>
    <property type="project" value="TAIR"/>
</dbReference>
<dbReference type="FunFam" id="3.30.559.10:FF:000033">
    <property type="entry name" value="O-acyltransferase (WSD1-like) family protein"/>
    <property type="match status" value="1"/>
</dbReference>
<dbReference type="Gene3D" id="3.30.559.10">
    <property type="entry name" value="Chloramphenicol acetyltransferase-like domain"/>
    <property type="match status" value="1"/>
</dbReference>
<dbReference type="InterPro" id="IPR023213">
    <property type="entry name" value="CAT-like_dom_sf"/>
</dbReference>
<dbReference type="InterPro" id="IPR045034">
    <property type="entry name" value="O-acyltransferase_WSD1-like"/>
</dbReference>
<dbReference type="InterPro" id="IPR009721">
    <property type="entry name" value="O-acyltransferase_WSD1_C"/>
</dbReference>
<dbReference type="InterPro" id="IPR004255">
    <property type="entry name" value="O-acyltransferase_WSD1_N"/>
</dbReference>
<dbReference type="PANTHER" id="PTHR31650">
    <property type="entry name" value="O-ACYLTRANSFERASE (WSD1-LIKE) FAMILY PROTEIN"/>
    <property type="match status" value="1"/>
</dbReference>
<dbReference type="PANTHER" id="PTHR31650:SF80">
    <property type="entry name" value="WAX ESTER SYNTHASE_DIACYLGLYCEROL ACYLTRANSFERASE 6"/>
    <property type="match status" value="1"/>
</dbReference>
<dbReference type="Pfam" id="PF06974">
    <property type="entry name" value="WS_DGAT_C"/>
    <property type="match status" value="1"/>
</dbReference>
<dbReference type="Pfam" id="PF03007">
    <property type="entry name" value="WS_DGAT_cat"/>
    <property type="match status" value="1"/>
</dbReference>
<dbReference type="SUPFAM" id="SSF52777">
    <property type="entry name" value="CoA-dependent acyltransferases"/>
    <property type="match status" value="1"/>
</dbReference>
<reference key="1">
    <citation type="journal article" date="2000" name="Nature">
        <title>Sequence and analysis of chromosome 3 of the plant Arabidopsis thaliana.</title>
        <authorList>
            <person name="Salanoubat M."/>
            <person name="Lemcke K."/>
            <person name="Rieger M."/>
            <person name="Ansorge W."/>
            <person name="Unseld M."/>
            <person name="Fartmann B."/>
            <person name="Valle G."/>
            <person name="Bloecker H."/>
            <person name="Perez-Alonso M."/>
            <person name="Obermaier B."/>
            <person name="Delseny M."/>
            <person name="Boutry M."/>
            <person name="Grivell L.A."/>
            <person name="Mache R."/>
            <person name="Puigdomenech P."/>
            <person name="De Simone V."/>
            <person name="Choisne N."/>
            <person name="Artiguenave F."/>
            <person name="Robert C."/>
            <person name="Brottier P."/>
            <person name="Wincker P."/>
            <person name="Cattolico L."/>
            <person name="Weissenbach J."/>
            <person name="Saurin W."/>
            <person name="Quetier F."/>
            <person name="Schaefer M."/>
            <person name="Mueller-Auer S."/>
            <person name="Gabel C."/>
            <person name="Fuchs M."/>
            <person name="Benes V."/>
            <person name="Wurmbach E."/>
            <person name="Drzonek H."/>
            <person name="Erfle H."/>
            <person name="Jordan N."/>
            <person name="Bangert S."/>
            <person name="Wiedelmann R."/>
            <person name="Kranz H."/>
            <person name="Voss H."/>
            <person name="Holland R."/>
            <person name="Brandt P."/>
            <person name="Nyakatura G."/>
            <person name="Vezzi A."/>
            <person name="D'Angelo M."/>
            <person name="Pallavicini A."/>
            <person name="Toppo S."/>
            <person name="Simionati B."/>
            <person name="Conrad A."/>
            <person name="Hornischer K."/>
            <person name="Kauer G."/>
            <person name="Loehnert T.-H."/>
            <person name="Nordsiek G."/>
            <person name="Reichelt J."/>
            <person name="Scharfe M."/>
            <person name="Schoen O."/>
            <person name="Bargues M."/>
            <person name="Terol J."/>
            <person name="Climent J."/>
            <person name="Navarro P."/>
            <person name="Collado C."/>
            <person name="Perez-Perez A."/>
            <person name="Ottenwaelder B."/>
            <person name="Duchemin D."/>
            <person name="Cooke R."/>
            <person name="Laudie M."/>
            <person name="Berger-Llauro C."/>
            <person name="Purnelle B."/>
            <person name="Masuy D."/>
            <person name="de Haan M."/>
            <person name="Maarse A.C."/>
            <person name="Alcaraz J.-P."/>
            <person name="Cottet A."/>
            <person name="Casacuberta E."/>
            <person name="Monfort A."/>
            <person name="Argiriou A."/>
            <person name="Flores M."/>
            <person name="Liguori R."/>
            <person name="Vitale D."/>
            <person name="Mannhaupt G."/>
            <person name="Haase D."/>
            <person name="Schoof H."/>
            <person name="Rudd S."/>
            <person name="Zaccaria P."/>
            <person name="Mewes H.-W."/>
            <person name="Mayer K.F.X."/>
            <person name="Kaul S."/>
            <person name="Town C.D."/>
            <person name="Koo H.L."/>
            <person name="Tallon L.J."/>
            <person name="Jenkins J."/>
            <person name="Rooney T."/>
            <person name="Rizzo M."/>
            <person name="Walts A."/>
            <person name="Utterback T."/>
            <person name="Fujii C.Y."/>
            <person name="Shea T.P."/>
            <person name="Creasy T.H."/>
            <person name="Haas B."/>
            <person name="Maiti R."/>
            <person name="Wu D."/>
            <person name="Peterson J."/>
            <person name="Van Aken S."/>
            <person name="Pai G."/>
            <person name="Militscher J."/>
            <person name="Sellers P."/>
            <person name="Gill J.E."/>
            <person name="Feldblyum T.V."/>
            <person name="Preuss D."/>
            <person name="Lin X."/>
            <person name="Nierman W.C."/>
            <person name="Salzberg S.L."/>
            <person name="White O."/>
            <person name="Venter J.C."/>
            <person name="Fraser C.M."/>
            <person name="Kaneko T."/>
            <person name="Nakamura Y."/>
            <person name="Sato S."/>
            <person name="Kato T."/>
            <person name="Asamizu E."/>
            <person name="Sasamoto S."/>
            <person name="Kimura T."/>
            <person name="Idesawa K."/>
            <person name="Kawashima K."/>
            <person name="Kishida Y."/>
            <person name="Kiyokawa C."/>
            <person name="Kohara M."/>
            <person name="Matsumoto M."/>
            <person name="Matsuno A."/>
            <person name="Muraki A."/>
            <person name="Nakayama S."/>
            <person name="Nakazaki N."/>
            <person name="Shinpo S."/>
            <person name="Takeuchi C."/>
            <person name="Wada T."/>
            <person name="Watanabe A."/>
            <person name="Yamada M."/>
            <person name="Yasuda M."/>
            <person name="Tabata S."/>
        </authorList>
    </citation>
    <scope>NUCLEOTIDE SEQUENCE [LARGE SCALE GENOMIC DNA]</scope>
    <source>
        <strain>cv. Columbia</strain>
    </source>
</reference>
<reference key="2">
    <citation type="journal article" date="2017" name="Plant J.">
        <title>Araport11: a complete reannotation of the Arabidopsis thaliana reference genome.</title>
        <authorList>
            <person name="Cheng C.Y."/>
            <person name="Krishnakumar V."/>
            <person name="Chan A.P."/>
            <person name="Thibaud-Nissen F."/>
            <person name="Schobel S."/>
            <person name="Town C.D."/>
        </authorList>
    </citation>
    <scope>GENOME REANNOTATION</scope>
    <source>
        <strain>cv. Columbia</strain>
    </source>
</reference>
<reference key="3">
    <citation type="journal article" date="2004" name="Genome Res.">
        <title>Whole genome sequence comparisons and 'full-length' cDNA sequences: a combined approach to evaluate and improve Arabidopsis genome annotation.</title>
        <authorList>
            <person name="Castelli V."/>
            <person name="Aury J.-M."/>
            <person name="Jaillon O."/>
            <person name="Wincker P."/>
            <person name="Clepet C."/>
            <person name="Menard M."/>
            <person name="Cruaud C."/>
            <person name="Quetier F."/>
            <person name="Scarpelli C."/>
            <person name="Schaechter V."/>
            <person name="Temple G."/>
            <person name="Caboche M."/>
            <person name="Weissenbach J."/>
            <person name="Salanoubat M."/>
        </authorList>
    </citation>
    <scope>NUCLEOTIDE SEQUENCE [LARGE SCALE MRNA] (ISOFORM 1)</scope>
    <source>
        <strain>cv. Columbia</strain>
    </source>
</reference>
<reference key="4">
    <citation type="submission" date="2006-07" db="EMBL/GenBank/DDBJ databases">
        <title>Large-scale analysis of RIKEN Arabidopsis full-length (RAFL) cDNAs.</title>
        <authorList>
            <person name="Totoki Y."/>
            <person name="Seki M."/>
            <person name="Ishida J."/>
            <person name="Nakajima M."/>
            <person name="Enju A."/>
            <person name="Kamiya A."/>
            <person name="Narusaka M."/>
            <person name="Shin-i T."/>
            <person name="Nakagawa M."/>
            <person name="Sakamoto N."/>
            <person name="Oishi K."/>
            <person name="Kohara Y."/>
            <person name="Kobayashi M."/>
            <person name="Toyoda A."/>
            <person name="Sakaki Y."/>
            <person name="Sakurai T."/>
            <person name="Iida K."/>
            <person name="Akiyama K."/>
            <person name="Satou M."/>
            <person name="Toyoda T."/>
            <person name="Konagaya A."/>
            <person name="Carninci P."/>
            <person name="Kawai J."/>
            <person name="Hayashizaki Y."/>
            <person name="Shinozaki K."/>
        </authorList>
    </citation>
    <scope>NUCLEOTIDE SEQUENCE [LARGE SCALE MRNA] (ISOFORM 2)</scope>
    <source>
        <strain>cv. Columbia</strain>
    </source>
</reference>
<reference key="5">
    <citation type="journal article" date="2003" name="J. Biol. Chem.">
        <title>A novel bifunctional wax ester synthase/acyl-CoA:diacylglycerol acyltransferase mediates wax ester and triacylglycerol biosynthesis in Acinetobacter calcoaceticus ADP1.</title>
        <authorList>
            <person name="Kalscheuer R."/>
            <person name="Steinbuchel A."/>
        </authorList>
    </citation>
    <scope>GENE FAMILY</scope>
</reference>
<reference key="6">
    <citation type="journal article" date="2005" name="Plant Physiol.">
        <title>Cuticular lipid composition, surface structure, and gene expression in Arabidopsis stem epidermis.</title>
        <authorList>
            <person name="Suh M.C."/>
            <person name="Samuels A.L."/>
            <person name="Jetter R."/>
            <person name="Kunst L."/>
            <person name="Pollard M."/>
            <person name="Ohlrogge J."/>
            <person name="Beisson F."/>
        </authorList>
    </citation>
    <scope>INDUCTION</scope>
</reference>
<reference key="7">
    <citation type="journal article" date="2008" name="Plant Physiol.">
        <title>Identification of the wax ester synthase/acyl-coenzyme A: diacylglycerol acyltransferase WSD1 required for stem wax ester biosynthesis in Arabidopsis.</title>
        <authorList>
            <person name="Li F."/>
            <person name="Wu X."/>
            <person name="Lam P."/>
            <person name="Bird D."/>
            <person name="Zheng H."/>
            <person name="Samuels A.L."/>
            <person name="Jetter R."/>
            <person name="Kunst L."/>
        </authorList>
    </citation>
    <scope>GENE FAMILY</scope>
    <scope>NOMENCLATURE</scope>
</reference>
<reference key="8">
    <citation type="journal article" date="2009" name="J. Proteomics">
        <title>Phosphoproteomic analysis of nuclei-enriched fractions from Arabidopsis thaliana.</title>
        <authorList>
            <person name="Jones A.M.E."/>
            <person name="MacLean D."/>
            <person name="Studholme D.J."/>
            <person name="Serna-Sanz A."/>
            <person name="Andreasson E."/>
            <person name="Rathjen J.P."/>
            <person name="Peck S.C."/>
        </authorList>
    </citation>
    <scope>IDENTIFICATION BY MASS SPECTROMETRY [LARGE SCALE ANALYSIS]</scope>
</reference>
<reference key="9">
    <citation type="journal article" date="2013" name="Arabidopsis Book">
        <title>Acyl-lipid metabolism.</title>
        <authorList>
            <person name="Li-Beisson Y."/>
            <person name="Shorrosh B."/>
            <person name="Beisson F."/>
            <person name="Andersson M.X."/>
            <person name="Arondel V."/>
            <person name="Bates P.D."/>
            <person name="Baud S."/>
            <person name="Bird D."/>
            <person name="Debono A."/>
            <person name="Durrett T.P."/>
            <person name="Franke R.B."/>
            <person name="Graham I.A."/>
            <person name="Katayama K."/>
            <person name="Kelly A.A."/>
            <person name="Larson T."/>
            <person name="Markham J.E."/>
            <person name="Miquel M."/>
            <person name="Molina I."/>
            <person name="Nishida I."/>
            <person name="Rowland O."/>
            <person name="Samuels L."/>
            <person name="Schmid K.M."/>
            <person name="Wada H."/>
            <person name="Welti R."/>
            <person name="Xu C."/>
            <person name="Zallot R."/>
            <person name="Ohlrogge J."/>
        </authorList>
    </citation>
    <scope>REVIEW ON ACYL-LIPID METABOLISM</scope>
</reference>
<reference key="10">
    <citation type="journal article" date="2019" name="Plant J.">
        <title>Surface wax esters contribute to drought tolerance in Arabidopsis.</title>
        <authorList>
            <person name="Patwari P."/>
            <person name="Salewski V."/>
            <person name="Gutbrod K."/>
            <person name="Kreszies T."/>
            <person name="Dresen-Scholz B."/>
            <person name="Peisker H."/>
            <person name="Steiner U."/>
            <person name="Meyer A.J."/>
            <person name="Schreiber L."/>
            <person name="Doermann P."/>
        </authorList>
    </citation>
    <scope>FUNCTION</scope>
    <scope>DISRUPTION PHENOTYPE</scope>
    <scope>CATALYTIC ACTIVITY</scope>
    <scope>INDUCTION BY DROUGHT; SALT AND ABSCISIC ACID</scope>
    <scope>SUBCELLULAR LOCATION</scope>
    <scope>TISSUE SPECIFICITY</scope>
    <source>
        <strain>cv. Columbia</strain>
    </source>
</reference>
<protein>
    <recommendedName>
        <fullName evidence="8 9">Wax ester synthase/diacylglycerol acyltransferase 6</fullName>
        <shortName evidence="8 9">WS/DGAT 6</shortName>
    </recommendedName>
    <alternativeName>
        <fullName evidence="8">Diacylglycerol O-acyltransferase WSD6</fullName>
        <ecNumber evidence="2">2.3.1.20</ecNumber>
    </alternativeName>
    <alternativeName>
        <fullName evidence="8">Long-chain-alcohol O-fatty-acyltransferase WSD6</fullName>
        <ecNumber evidence="7">2.3.1.75</ecNumber>
    </alternativeName>
</protein>
<comment type="function">
    <text evidence="2 7">Bifunctional wax ester synthase/diacylglycerol acyltransferase that uses acyl-CoAs with 16, 18 and 20 carbons as substrates, preferably in combination with 16:0ol alcohol (PubMed:30729606). Involved in cuticular wax biosynthesis (By similarity).</text>
</comment>
<comment type="catalytic activity">
    <reaction evidence="2">
        <text>an acyl-CoA + a 1,2-diacyl-sn-glycerol = a triacyl-sn-glycerol + CoA</text>
        <dbReference type="Rhea" id="RHEA:10868"/>
        <dbReference type="ChEBI" id="CHEBI:17815"/>
        <dbReference type="ChEBI" id="CHEBI:57287"/>
        <dbReference type="ChEBI" id="CHEBI:58342"/>
        <dbReference type="ChEBI" id="CHEBI:64615"/>
        <dbReference type="EC" id="2.3.1.20"/>
    </reaction>
</comment>
<comment type="catalytic activity">
    <reaction evidence="7">
        <text>a long chain fatty alcohol + a fatty acyl-CoA = a wax ester + CoA</text>
        <dbReference type="Rhea" id="RHEA:38443"/>
        <dbReference type="ChEBI" id="CHEBI:10036"/>
        <dbReference type="ChEBI" id="CHEBI:17135"/>
        <dbReference type="ChEBI" id="CHEBI:57287"/>
        <dbReference type="ChEBI" id="CHEBI:77636"/>
        <dbReference type="EC" id="2.3.1.75"/>
    </reaction>
</comment>
<comment type="pathway">
    <text evidence="2">Glycerolipid metabolism; triacylglycerol biosynthesis.</text>
</comment>
<comment type="pathway">
    <text evidence="2">Lipid metabolism.</text>
</comment>
<comment type="subcellular location">
    <subcellularLocation>
        <location evidence="1">Cell membrane</location>
        <topology evidence="3">Single-pass membrane protein</topology>
    </subcellularLocation>
    <subcellularLocation>
        <location evidence="7">Endoplasmic reticulum membrane</location>
        <topology evidence="3">Single-pass membrane protein</topology>
    </subcellularLocation>
    <subcellularLocation>
        <location evidence="7">Golgi apparatus membrane</location>
        <topology evidence="3">Single-pass membrane protein</topology>
    </subcellularLocation>
</comment>
<comment type="alternative products">
    <event type="alternative splicing"/>
    <isoform>
        <id>Q9M3B1-1</id>
        <name>1</name>
        <sequence type="displayed"/>
    </isoform>
    <isoform>
        <id>Q9M3B1-2</id>
        <name>2</name>
        <sequence type="described" ref="VSP_061028"/>
    </isoform>
</comment>
<comment type="tissue specificity">
    <text evidence="7">Expressed in roots, stems, leaves, flowers and siliques.</text>
</comment>
<comment type="induction">
    <text evidence="6 7">Induced in roots and leaves during drought and salt stresses, and upon abscisic acid (ABA) treatment (PubMed:30729606). Up-regulated in the stem epidermis during active wax synthesis (PubMed:16299169).</text>
</comment>
<comment type="disruption phenotype">
    <text evidence="7">Normal wax ester loads on leaves.</text>
</comment>
<comment type="similarity">
    <text evidence="10">In the N-terminal section; belongs to the long-chain O-acyltransferase family.</text>
</comment>
<evidence type="ECO:0000250" key="1">
    <source>
        <dbReference type="UniProtKB" id="Q5KS41"/>
    </source>
</evidence>
<evidence type="ECO:0000250" key="2">
    <source>
        <dbReference type="UniProtKB" id="Q93ZR6"/>
    </source>
</evidence>
<evidence type="ECO:0000255" key="3"/>
<evidence type="ECO:0000255" key="4">
    <source>
        <dbReference type="PROSITE-ProRule" id="PRU00498"/>
    </source>
</evidence>
<evidence type="ECO:0000256" key="5">
    <source>
        <dbReference type="SAM" id="MobiDB-lite"/>
    </source>
</evidence>
<evidence type="ECO:0000269" key="6">
    <source>
    </source>
</evidence>
<evidence type="ECO:0000269" key="7">
    <source>
    </source>
</evidence>
<evidence type="ECO:0000303" key="8">
    <source>
    </source>
</evidence>
<evidence type="ECO:0000303" key="9">
    <source>
    </source>
</evidence>
<evidence type="ECO:0000305" key="10"/>
<evidence type="ECO:0000312" key="11">
    <source>
        <dbReference type="Araport" id="AT3G49210"/>
    </source>
</evidence>
<evidence type="ECO:0000312" key="12">
    <source>
        <dbReference type="EMBL" id="CAB66400.1"/>
    </source>
</evidence>
<sequence>MEIKTRRDTSETSVRKDDEEEVEEEQPLSPAARVFHAPEFNCYVISVIGIKKKIDPDVIIEGLKQTLIRHPRFSSKMVSTSVGNKKRQTQSWVRTNVVVTDHVIVSDIQTQNIENGNADAFLETYVSNLTTVPLDISKPLWQLHLLDLKTSDAENVAVLKFHHSLGDGMSLMALVLACMRKTSNPDELPSLPNQNRSSSRSSRLMAGSRGDSRFLWLVMVIWSAIMLVLNTVCDALEFIATTMFLKDTETPIKGDFRFSKSKRMCLVHRTVSLDDIKLIKNTMKMTVNDVVLGVSQAGLSQYLDRRYGEKKKKVGEDQDSKRKATDMPKRIRLRSALLVNLRPNTGIQDLADMMAKGSTCRWGNWIGYIVFPFSIGLRDDPLQHLRRAKRIIDRKKNSLEAALTFVAGKFILKTFGVQVAAKIINRALSNTTMSFSNLIGPIEEISFYGHPITYMAPSVYGHPHALTMHFQSYMNQMTISLTVDPTVISDPHRLLDDWEKSLQSIKAAVQERDSRSLD</sequence>
<name>WSD6_ARATH</name>
<keyword id="KW-0012">Acyltransferase</keyword>
<keyword id="KW-0025">Alternative splicing</keyword>
<keyword id="KW-1003">Cell membrane</keyword>
<keyword id="KW-0256">Endoplasmic reticulum</keyword>
<keyword id="KW-0325">Glycoprotein</keyword>
<keyword id="KW-0333">Golgi apparatus</keyword>
<keyword id="KW-0472">Membrane</keyword>
<keyword id="KW-1185">Reference proteome</keyword>
<keyword id="KW-0346">Stress response</keyword>
<keyword id="KW-0808">Transferase</keyword>
<keyword id="KW-0812">Transmembrane</keyword>
<keyword id="KW-1133">Transmembrane helix</keyword>
<organism>
    <name type="scientific">Arabidopsis thaliana</name>
    <name type="common">Mouse-ear cress</name>
    <dbReference type="NCBI Taxonomy" id="3702"/>
    <lineage>
        <taxon>Eukaryota</taxon>
        <taxon>Viridiplantae</taxon>
        <taxon>Streptophyta</taxon>
        <taxon>Embryophyta</taxon>
        <taxon>Tracheophyta</taxon>
        <taxon>Spermatophyta</taxon>
        <taxon>Magnoliopsida</taxon>
        <taxon>eudicotyledons</taxon>
        <taxon>Gunneridae</taxon>
        <taxon>Pentapetalae</taxon>
        <taxon>rosids</taxon>
        <taxon>malvids</taxon>
        <taxon>Brassicales</taxon>
        <taxon>Brassicaceae</taxon>
        <taxon>Camelineae</taxon>
        <taxon>Arabidopsis</taxon>
    </lineage>
</organism>